<accession>Q817B1</accession>
<name>THII_BACCR</name>
<dbReference type="EC" id="2.8.1.4" evidence="1"/>
<dbReference type="EMBL" id="AE016877">
    <property type="protein sequence ID" value="AAP11554.1"/>
    <property type="molecule type" value="Genomic_DNA"/>
</dbReference>
<dbReference type="RefSeq" id="NP_834353.1">
    <property type="nucleotide sequence ID" value="NC_004722.1"/>
</dbReference>
<dbReference type="RefSeq" id="WP_000922339.1">
    <property type="nucleotide sequence ID" value="NC_004722.1"/>
</dbReference>
<dbReference type="SMR" id="Q817B1"/>
<dbReference type="STRING" id="226900.BC_4647"/>
<dbReference type="KEGG" id="bce:BC4647"/>
<dbReference type="PATRIC" id="fig|226900.8.peg.4811"/>
<dbReference type="HOGENOM" id="CLU_037952_4_0_9"/>
<dbReference type="OrthoDB" id="9773948at2"/>
<dbReference type="UniPathway" id="UPA00060"/>
<dbReference type="Proteomes" id="UP000001417">
    <property type="component" value="Chromosome"/>
</dbReference>
<dbReference type="GO" id="GO:0005829">
    <property type="term" value="C:cytosol"/>
    <property type="evidence" value="ECO:0000318"/>
    <property type="project" value="GO_Central"/>
</dbReference>
<dbReference type="GO" id="GO:0005524">
    <property type="term" value="F:ATP binding"/>
    <property type="evidence" value="ECO:0007669"/>
    <property type="project" value="UniProtKB-UniRule"/>
</dbReference>
<dbReference type="GO" id="GO:0004810">
    <property type="term" value="F:CCA tRNA nucleotidyltransferase activity"/>
    <property type="evidence" value="ECO:0007669"/>
    <property type="project" value="InterPro"/>
</dbReference>
<dbReference type="GO" id="GO:0000049">
    <property type="term" value="F:tRNA binding"/>
    <property type="evidence" value="ECO:0007669"/>
    <property type="project" value="UniProtKB-UniRule"/>
</dbReference>
<dbReference type="GO" id="GO:0140741">
    <property type="term" value="F:tRNA-uracil-4 sulfurtransferase activity"/>
    <property type="evidence" value="ECO:0007669"/>
    <property type="project" value="UniProtKB-EC"/>
</dbReference>
<dbReference type="GO" id="GO:0009228">
    <property type="term" value="P:thiamine biosynthetic process"/>
    <property type="evidence" value="ECO:0007669"/>
    <property type="project" value="UniProtKB-KW"/>
</dbReference>
<dbReference type="GO" id="GO:0009229">
    <property type="term" value="P:thiamine diphosphate biosynthetic process"/>
    <property type="evidence" value="ECO:0007669"/>
    <property type="project" value="UniProtKB-UniRule"/>
</dbReference>
<dbReference type="GO" id="GO:0052837">
    <property type="term" value="P:thiazole biosynthetic process"/>
    <property type="evidence" value="ECO:0000318"/>
    <property type="project" value="GO_Central"/>
</dbReference>
<dbReference type="GO" id="GO:0002937">
    <property type="term" value="P:tRNA 4-thiouridine biosynthesis"/>
    <property type="evidence" value="ECO:0000318"/>
    <property type="project" value="GO_Central"/>
</dbReference>
<dbReference type="CDD" id="cd01712">
    <property type="entry name" value="PPase_ThiI"/>
    <property type="match status" value="1"/>
</dbReference>
<dbReference type="CDD" id="cd11716">
    <property type="entry name" value="THUMP_ThiI"/>
    <property type="match status" value="1"/>
</dbReference>
<dbReference type="FunFam" id="3.30.2130.30:FF:000003">
    <property type="entry name" value="Probable tRNA sulfurtransferase"/>
    <property type="match status" value="1"/>
</dbReference>
<dbReference type="FunFam" id="3.40.50.620:FF:000053">
    <property type="entry name" value="Probable tRNA sulfurtransferase"/>
    <property type="match status" value="1"/>
</dbReference>
<dbReference type="Gene3D" id="3.30.2130.30">
    <property type="match status" value="1"/>
</dbReference>
<dbReference type="Gene3D" id="3.40.50.620">
    <property type="entry name" value="HUPs"/>
    <property type="match status" value="1"/>
</dbReference>
<dbReference type="HAMAP" id="MF_00021">
    <property type="entry name" value="ThiI"/>
    <property type="match status" value="1"/>
</dbReference>
<dbReference type="InterPro" id="IPR014729">
    <property type="entry name" value="Rossmann-like_a/b/a_fold"/>
</dbReference>
<dbReference type="InterPro" id="IPR020536">
    <property type="entry name" value="ThiI_AANH"/>
</dbReference>
<dbReference type="InterPro" id="IPR054173">
    <property type="entry name" value="ThiI_fer"/>
</dbReference>
<dbReference type="InterPro" id="IPR049961">
    <property type="entry name" value="ThiI_N"/>
</dbReference>
<dbReference type="InterPro" id="IPR004114">
    <property type="entry name" value="THUMP_dom"/>
</dbReference>
<dbReference type="InterPro" id="IPR049962">
    <property type="entry name" value="THUMP_ThiI"/>
</dbReference>
<dbReference type="InterPro" id="IPR003720">
    <property type="entry name" value="tRNA_STrfase"/>
</dbReference>
<dbReference type="InterPro" id="IPR050102">
    <property type="entry name" value="tRNA_sulfurtransferase_ThiI"/>
</dbReference>
<dbReference type="NCBIfam" id="TIGR00342">
    <property type="entry name" value="tRNA uracil 4-sulfurtransferase ThiI"/>
    <property type="match status" value="1"/>
</dbReference>
<dbReference type="PANTHER" id="PTHR43209">
    <property type="entry name" value="TRNA SULFURTRANSFERASE"/>
    <property type="match status" value="1"/>
</dbReference>
<dbReference type="PANTHER" id="PTHR43209:SF1">
    <property type="entry name" value="TRNA SULFURTRANSFERASE"/>
    <property type="match status" value="1"/>
</dbReference>
<dbReference type="Pfam" id="PF02568">
    <property type="entry name" value="ThiI"/>
    <property type="match status" value="1"/>
</dbReference>
<dbReference type="Pfam" id="PF22025">
    <property type="entry name" value="ThiI_fer"/>
    <property type="match status" value="1"/>
</dbReference>
<dbReference type="Pfam" id="PF02926">
    <property type="entry name" value="THUMP"/>
    <property type="match status" value="1"/>
</dbReference>
<dbReference type="SMART" id="SM00981">
    <property type="entry name" value="THUMP"/>
    <property type="match status" value="1"/>
</dbReference>
<dbReference type="SUPFAM" id="SSF52402">
    <property type="entry name" value="Adenine nucleotide alpha hydrolases-like"/>
    <property type="match status" value="1"/>
</dbReference>
<dbReference type="SUPFAM" id="SSF143437">
    <property type="entry name" value="THUMP domain-like"/>
    <property type="match status" value="1"/>
</dbReference>
<dbReference type="PROSITE" id="PS51165">
    <property type="entry name" value="THUMP"/>
    <property type="match status" value="1"/>
</dbReference>
<reference key="1">
    <citation type="journal article" date="2003" name="Nature">
        <title>Genome sequence of Bacillus cereus and comparative analysis with Bacillus anthracis.</title>
        <authorList>
            <person name="Ivanova N."/>
            <person name="Sorokin A."/>
            <person name="Anderson I."/>
            <person name="Galleron N."/>
            <person name="Candelon B."/>
            <person name="Kapatral V."/>
            <person name="Bhattacharyya A."/>
            <person name="Reznik G."/>
            <person name="Mikhailova N."/>
            <person name="Lapidus A."/>
            <person name="Chu L."/>
            <person name="Mazur M."/>
            <person name="Goltsman E."/>
            <person name="Larsen N."/>
            <person name="D'Souza M."/>
            <person name="Walunas T."/>
            <person name="Grechkin Y."/>
            <person name="Pusch G."/>
            <person name="Haselkorn R."/>
            <person name="Fonstein M."/>
            <person name="Ehrlich S.D."/>
            <person name="Overbeek R."/>
            <person name="Kyrpides N.C."/>
        </authorList>
    </citation>
    <scope>NUCLEOTIDE SEQUENCE [LARGE SCALE GENOMIC DNA]</scope>
    <source>
        <strain>ATCC 14579 / DSM 31 / CCUG 7414 / JCM 2152 / NBRC 15305 / NCIMB 9373 / NCTC 2599 / NRRL B-3711</strain>
    </source>
</reference>
<protein>
    <recommendedName>
        <fullName evidence="1">Probable tRNA sulfurtransferase</fullName>
        <ecNumber evidence="1">2.8.1.4</ecNumber>
    </recommendedName>
    <alternativeName>
        <fullName evidence="1">Sulfur carrier protein ThiS sulfurtransferase</fullName>
    </alternativeName>
    <alternativeName>
        <fullName evidence="1">Thiamine biosynthesis protein ThiI</fullName>
    </alternativeName>
    <alternativeName>
        <fullName evidence="1">tRNA 4-thiouridine synthase</fullName>
    </alternativeName>
</protein>
<gene>
    <name evidence="1" type="primary">thiI</name>
    <name type="ordered locus">BC_4647</name>
</gene>
<evidence type="ECO:0000255" key="1">
    <source>
        <dbReference type="HAMAP-Rule" id="MF_00021"/>
    </source>
</evidence>
<feature type="chain" id="PRO_0000154831" description="Probable tRNA sulfurtransferase">
    <location>
        <begin position="1"/>
        <end position="404"/>
    </location>
</feature>
<feature type="domain" description="THUMP" evidence="1">
    <location>
        <begin position="61"/>
        <end position="166"/>
    </location>
</feature>
<feature type="binding site" evidence="1">
    <location>
        <begin position="184"/>
        <end position="185"/>
    </location>
    <ligand>
        <name>ATP</name>
        <dbReference type="ChEBI" id="CHEBI:30616"/>
    </ligand>
</feature>
<feature type="binding site" evidence="1">
    <location>
        <begin position="209"/>
        <end position="210"/>
    </location>
    <ligand>
        <name>ATP</name>
        <dbReference type="ChEBI" id="CHEBI:30616"/>
    </ligand>
</feature>
<feature type="binding site" evidence="1">
    <location>
        <position position="266"/>
    </location>
    <ligand>
        <name>ATP</name>
        <dbReference type="ChEBI" id="CHEBI:30616"/>
    </ligand>
</feature>
<feature type="binding site" evidence="1">
    <location>
        <position position="288"/>
    </location>
    <ligand>
        <name>ATP</name>
        <dbReference type="ChEBI" id="CHEBI:30616"/>
    </ligand>
</feature>
<feature type="binding site" evidence="1">
    <location>
        <position position="297"/>
    </location>
    <ligand>
        <name>ATP</name>
        <dbReference type="ChEBI" id="CHEBI:30616"/>
    </ligand>
</feature>
<sequence length="404" mass="45871">MLKYEYILVRYGEMTTKGKNRSKFVSTLKDNVKFKLKKFPNIKIDATHDRMYIQLNGEDHEAVSERLKDVFGIHKFNLAMKVPSELEDIKEGALAAFLQVKGDVKTFKITVHRSYKRFPMRTMELLPEIGGHILENTEDITVDVHNPDVNVRVEIRSGYSYIMCDERMGAGGLPVGVGGKVMVLLSGGIDSPVAAYLTMKRGVSVEAVHFHSPPFTSERAKQKVIDLAQELTKYCKRVTLHLVPFTEVQKTINKEIPSSYSMTVMRRMMMRITERIAEERNALAITTGESLGQVASQTLDSMHTINEVTNYPVIRPLITMDKLEIIKIAEEIGTYDISIRPYEDCCTVFTPASPATKPKREKANRFEAKYDFTPLIDEAVANKETMVLQTVEVVAEEEKFEELF</sequence>
<organism>
    <name type="scientific">Bacillus cereus (strain ATCC 14579 / DSM 31 / CCUG 7414 / JCM 2152 / NBRC 15305 / NCIMB 9373 / NCTC 2599 / NRRL B-3711)</name>
    <dbReference type="NCBI Taxonomy" id="226900"/>
    <lineage>
        <taxon>Bacteria</taxon>
        <taxon>Bacillati</taxon>
        <taxon>Bacillota</taxon>
        <taxon>Bacilli</taxon>
        <taxon>Bacillales</taxon>
        <taxon>Bacillaceae</taxon>
        <taxon>Bacillus</taxon>
        <taxon>Bacillus cereus group</taxon>
    </lineage>
</organism>
<comment type="function">
    <text evidence="1">Catalyzes the ATP-dependent transfer of a sulfur to tRNA to produce 4-thiouridine in position 8 of tRNAs, which functions as a near-UV photosensor. Also catalyzes the transfer of sulfur to the sulfur carrier protein ThiS, forming ThiS-thiocarboxylate. This is a step in the synthesis of thiazole, in the thiamine biosynthesis pathway. The sulfur is donated as persulfide by IscS.</text>
</comment>
<comment type="catalytic activity">
    <reaction evidence="1">
        <text>[ThiI sulfur-carrier protein]-S-sulfanyl-L-cysteine + a uridine in tRNA + 2 reduced [2Fe-2S]-[ferredoxin] + ATP + H(+) = [ThiI sulfur-carrier protein]-L-cysteine + a 4-thiouridine in tRNA + 2 oxidized [2Fe-2S]-[ferredoxin] + AMP + diphosphate</text>
        <dbReference type="Rhea" id="RHEA:24176"/>
        <dbReference type="Rhea" id="RHEA-COMP:10000"/>
        <dbReference type="Rhea" id="RHEA-COMP:10001"/>
        <dbReference type="Rhea" id="RHEA-COMP:13337"/>
        <dbReference type="Rhea" id="RHEA-COMP:13338"/>
        <dbReference type="Rhea" id="RHEA-COMP:13339"/>
        <dbReference type="Rhea" id="RHEA-COMP:13340"/>
        <dbReference type="ChEBI" id="CHEBI:15378"/>
        <dbReference type="ChEBI" id="CHEBI:29950"/>
        <dbReference type="ChEBI" id="CHEBI:30616"/>
        <dbReference type="ChEBI" id="CHEBI:33019"/>
        <dbReference type="ChEBI" id="CHEBI:33737"/>
        <dbReference type="ChEBI" id="CHEBI:33738"/>
        <dbReference type="ChEBI" id="CHEBI:61963"/>
        <dbReference type="ChEBI" id="CHEBI:65315"/>
        <dbReference type="ChEBI" id="CHEBI:136798"/>
        <dbReference type="ChEBI" id="CHEBI:456215"/>
        <dbReference type="EC" id="2.8.1.4"/>
    </reaction>
</comment>
<comment type="catalytic activity">
    <reaction evidence="1">
        <text>[ThiS sulfur-carrier protein]-C-terminal Gly-Gly-AMP + S-sulfanyl-L-cysteinyl-[cysteine desulfurase] + AH2 = [ThiS sulfur-carrier protein]-C-terminal-Gly-aminoethanethioate + L-cysteinyl-[cysteine desulfurase] + A + AMP + 2 H(+)</text>
        <dbReference type="Rhea" id="RHEA:43340"/>
        <dbReference type="Rhea" id="RHEA-COMP:12157"/>
        <dbReference type="Rhea" id="RHEA-COMP:12158"/>
        <dbReference type="Rhea" id="RHEA-COMP:12910"/>
        <dbReference type="Rhea" id="RHEA-COMP:19908"/>
        <dbReference type="ChEBI" id="CHEBI:13193"/>
        <dbReference type="ChEBI" id="CHEBI:15378"/>
        <dbReference type="ChEBI" id="CHEBI:17499"/>
        <dbReference type="ChEBI" id="CHEBI:29950"/>
        <dbReference type="ChEBI" id="CHEBI:61963"/>
        <dbReference type="ChEBI" id="CHEBI:90618"/>
        <dbReference type="ChEBI" id="CHEBI:232372"/>
        <dbReference type="ChEBI" id="CHEBI:456215"/>
    </reaction>
</comment>
<comment type="pathway">
    <text evidence="1">Cofactor biosynthesis; thiamine diphosphate biosynthesis.</text>
</comment>
<comment type="subcellular location">
    <subcellularLocation>
        <location evidence="1">Cytoplasm</location>
    </subcellularLocation>
</comment>
<comment type="similarity">
    <text evidence="1">Belongs to the ThiI family.</text>
</comment>
<proteinExistence type="inferred from homology"/>
<keyword id="KW-0067">ATP-binding</keyword>
<keyword id="KW-0963">Cytoplasm</keyword>
<keyword id="KW-0547">Nucleotide-binding</keyword>
<keyword id="KW-1185">Reference proteome</keyword>
<keyword id="KW-0694">RNA-binding</keyword>
<keyword id="KW-0784">Thiamine biosynthesis</keyword>
<keyword id="KW-0808">Transferase</keyword>
<keyword id="KW-0820">tRNA-binding</keyword>